<organism>
    <name type="scientific">Acinetobacter baumannii (strain ATCC 17978 / DSM 105126 / CIP 53.77 / LMG 1025 / NCDC KC755 / 5377)</name>
    <dbReference type="NCBI Taxonomy" id="400667"/>
    <lineage>
        <taxon>Bacteria</taxon>
        <taxon>Pseudomonadati</taxon>
        <taxon>Pseudomonadota</taxon>
        <taxon>Gammaproteobacteria</taxon>
        <taxon>Moraxellales</taxon>
        <taxon>Moraxellaceae</taxon>
        <taxon>Acinetobacter</taxon>
        <taxon>Acinetobacter calcoaceticus/baumannii complex</taxon>
    </lineage>
</organism>
<name>LEPA_ACIBT</name>
<keyword id="KW-0997">Cell inner membrane</keyword>
<keyword id="KW-1003">Cell membrane</keyword>
<keyword id="KW-0342">GTP-binding</keyword>
<keyword id="KW-0378">Hydrolase</keyword>
<keyword id="KW-0472">Membrane</keyword>
<keyword id="KW-0547">Nucleotide-binding</keyword>
<keyword id="KW-0648">Protein biosynthesis</keyword>
<protein>
    <recommendedName>
        <fullName evidence="1">Elongation factor 4</fullName>
        <shortName evidence="1">EF-4</shortName>
        <ecNumber evidence="1">3.6.5.n1</ecNumber>
    </recommendedName>
    <alternativeName>
        <fullName evidence="1">Ribosomal back-translocase LepA</fullName>
    </alternativeName>
</protein>
<reference key="1">
    <citation type="journal article" date="2007" name="Genes Dev.">
        <title>New insights into Acinetobacter baumannii pathogenesis revealed by high-density pyrosequencing and transposon mutagenesis.</title>
        <authorList>
            <person name="Smith M.G."/>
            <person name="Gianoulis T.A."/>
            <person name="Pukatzki S."/>
            <person name="Mekalanos J.J."/>
            <person name="Ornston L.N."/>
            <person name="Gerstein M."/>
            <person name="Snyder M."/>
        </authorList>
    </citation>
    <scope>NUCLEOTIDE SEQUENCE [LARGE SCALE GENOMIC DNA]</scope>
    <source>
        <strain>ATCC 17978 / DSM 105126 / CIP 53.77 / LMG 1025 / NCDC KC755 / 5377</strain>
    </source>
</reference>
<sequence>MAQAKKSVDIKNIRNFSIIAHIDHGKSTLADRFIQMCGGLQDREMQAQVLDSMELERERGITIKAASVTLYYTHPNGQEYQLNFIDTPGHVDFSYEVSRSLAACEGALLVVDAAQGVEAQSVANCYTAIEQGLEVLPILNKIDLPQAEPERVIHEIEEIIGIEATNAPTCSAKTGLGVEGVLETLVDVIPAPTGDREAPLQALIIDSWFDNYLGVVSLVRIKDGRIRKGDKMLVKSTGQTHIVTSVGVFNPKHTETGVLEAGEVGFVIAGIKDIFGAPVGDTITLSTTPEVASLPGFKKVKPQVYAGLFPIDASDFEPFREALQKLQINDSALFFEPESSDALGFGFRCGFLGMLHMEIVQERLEREYDLDLISSAPTVVYEAVTKKGDTIYIDSPSKMPDGSVVEDLREPIAECHILVPQEYLGNVMTLCIERRGVQKDMKFLGNQVSITFEIPMAEVVMDFFDKLKSCSRGFASLDYNFIRFESSSLVKVDVLINGEKVDALAMICHRNDARHRGIALVEKMKDLIPRQMFDVAIQAAIGAQIIARSTVKAMRKNVLAKCYGGDVSRKKKLLAKQKEGKKRMKQVGSVEIPQEAFLAVLKVER</sequence>
<comment type="function">
    <text evidence="1">Required for accurate and efficient protein synthesis under certain stress conditions. May act as a fidelity factor of the translation reaction, by catalyzing a one-codon backward translocation of tRNAs on improperly translocated ribosomes. Back-translocation proceeds from a post-translocation (POST) complex to a pre-translocation (PRE) complex, thus giving elongation factor G a second chance to translocate the tRNAs correctly. Binds to ribosomes in a GTP-dependent manner.</text>
</comment>
<comment type="catalytic activity">
    <reaction evidence="1">
        <text>GTP + H2O = GDP + phosphate + H(+)</text>
        <dbReference type="Rhea" id="RHEA:19669"/>
        <dbReference type="ChEBI" id="CHEBI:15377"/>
        <dbReference type="ChEBI" id="CHEBI:15378"/>
        <dbReference type="ChEBI" id="CHEBI:37565"/>
        <dbReference type="ChEBI" id="CHEBI:43474"/>
        <dbReference type="ChEBI" id="CHEBI:58189"/>
        <dbReference type="EC" id="3.6.5.n1"/>
    </reaction>
</comment>
<comment type="subcellular location">
    <subcellularLocation>
        <location evidence="1">Cell inner membrane</location>
        <topology evidence="1">Peripheral membrane protein</topology>
        <orientation evidence="1">Cytoplasmic side</orientation>
    </subcellularLocation>
</comment>
<comment type="similarity">
    <text evidence="1">Belongs to the TRAFAC class translation factor GTPase superfamily. Classic translation factor GTPase family. LepA subfamily.</text>
</comment>
<gene>
    <name evidence="1" type="primary">lepA</name>
    <name type="ordered locus">A1S_2522</name>
</gene>
<proteinExistence type="inferred from homology"/>
<accession>A3M7P5</accession>
<evidence type="ECO:0000255" key="1">
    <source>
        <dbReference type="HAMAP-Rule" id="MF_00071"/>
    </source>
</evidence>
<feature type="chain" id="PRO_1000092365" description="Elongation factor 4">
    <location>
        <begin position="1"/>
        <end position="605"/>
    </location>
</feature>
<feature type="domain" description="tr-type G">
    <location>
        <begin position="11"/>
        <end position="193"/>
    </location>
</feature>
<feature type="binding site" evidence="1">
    <location>
        <begin position="23"/>
        <end position="28"/>
    </location>
    <ligand>
        <name>GTP</name>
        <dbReference type="ChEBI" id="CHEBI:37565"/>
    </ligand>
</feature>
<feature type="binding site" evidence="1">
    <location>
        <begin position="140"/>
        <end position="143"/>
    </location>
    <ligand>
        <name>GTP</name>
        <dbReference type="ChEBI" id="CHEBI:37565"/>
    </ligand>
</feature>
<dbReference type="EC" id="3.6.5.n1" evidence="1"/>
<dbReference type="EMBL" id="CP000521">
    <property type="protein sequence ID" value="ABO12939.2"/>
    <property type="molecule type" value="Genomic_DNA"/>
</dbReference>
<dbReference type="RefSeq" id="WP_000035781.1">
    <property type="nucleotide sequence ID" value="NZ_CP053098.1"/>
</dbReference>
<dbReference type="SMR" id="A3M7P5"/>
<dbReference type="GeneID" id="92894832"/>
<dbReference type="KEGG" id="acb:A1S_2522"/>
<dbReference type="HOGENOM" id="CLU_009995_3_3_6"/>
<dbReference type="GO" id="GO:0005886">
    <property type="term" value="C:plasma membrane"/>
    <property type="evidence" value="ECO:0007669"/>
    <property type="project" value="UniProtKB-SubCell"/>
</dbReference>
<dbReference type="GO" id="GO:0005525">
    <property type="term" value="F:GTP binding"/>
    <property type="evidence" value="ECO:0007669"/>
    <property type="project" value="UniProtKB-UniRule"/>
</dbReference>
<dbReference type="GO" id="GO:0003924">
    <property type="term" value="F:GTPase activity"/>
    <property type="evidence" value="ECO:0007669"/>
    <property type="project" value="UniProtKB-UniRule"/>
</dbReference>
<dbReference type="GO" id="GO:0097216">
    <property type="term" value="F:guanosine tetraphosphate binding"/>
    <property type="evidence" value="ECO:0007669"/>
    <property type="project" value="UniProtKB-ARBA"/>
</dbReference>
<dbReference type="GO" id="GO:0043022">
    <property type="term" value="F:ribosome binding"/>
    <property type="evidence" value="ECO:0007669"/>
    <property type="project" value="UniProtKB-UniRule"/>
</dbReference>
<dbReference type="GO" id="GO:0003746">
    <property type="term" value="F:translation elongation factor activity"/>
    <property type="evidence" value="ECO:0007669"/>
    <property type="project" value="UniProtKB-UniRule"/>
</dbReference>
<dbReference type="GO" id="GO:0045727">
    <property type="term" value="P:positive regulation of translation"/>
    <property type="evidence" value="ECO:0007669"/>
    <property type="project" value="UniProtKB-UniRule"/>
</dbReference>
<dbReference type="CDD" id="cd03699">
    <property type="entry name" value="EF4_II"/>
    <property type="match status" value="1"/>
</dbReference>
<dbReference type="CDD" id="cd16260">
    <property type="entry name" value="EF4_III"/>
    <property type="match status" value="1"/>
</dbReference>
<dbReference type="CDD" id="cd01890">
    <property type="entry name" value="LepA"/>
    <property type="match status" value="1"/>
</dbReference>
<dbReference type="CDD" id="cd03709">
    <property type="entry name" value="lepA_C"/>
    <property type="match status" value="1"/>
</dbReference>
<dbReference type="FunFam" id="3.40.50.300:FF:000078">
    <property type="entry name" value="Elongation factor 4"/>
    <property type="match status" value="1"/>
</dbReference>
<dbReference type="FunFam" id="2.40.30.10:FF:000015">
    <property type="entry name" value="Translation factor GUF1, mitochondrial"/>
    <property type="match status" value="1"/>
</dbReference>
<dbReference type="FunFam" id="3.30.70.240:FF:000007">
    <property type="entry name" value="Translation factor GUF1, mitochondrial"/>
    <property type="match status" value="1"/>
</dbReference>
<dbReference type="FunFam" id="3.30.70.2570:FF:000001">
    <property type="entry name" value="Translation factor GUF1, mitochondrial"/>
    <property type="match status" value="1"/>
</dbReference>
<dbReference type="FunFam" id="3.30.70.870:FF:000004">
    <property type="entry name" value="Translation factor GUF1, mitochondrial"/>
    <property type="match status" value="1"/>
</dbReference>
<dbReference type="Gene3D" id="3.30.70.240">
    <property type="match status" value="1"/>
</dbReference>
<dbReference type="Gene3D" id="3.30.70.2570">
    <property type="entry name" value="Elongation factor 4, C-terminal domain"/>
    <property type="match status" value="1"/>
</dbReference>
<dbReference type="Gene3D" id="3.30.70.870">
    <property type="entry name" value="Elongation Factor G (Translational Gtpase), domain 3"/>
    <property type="match status" value="1"/>
</dbReference>
<dbReference type="Gene3D" id="3.40.50.300">
    <property type="entry name" value="P-loop containing nucleotide triphosphate hydrolases"/>
    <property type="match status" value="1"/>
</dbReference>
<dbReference type="Gene3D" id="2.40.30.10">
    <property type="entry name" value="Translation factors"/>
    <property type="match status" value="1"/>
</dbReference>
<dbReference type="HAMAP" id="MF_00071">
    <property type="entry name" value="LepA"/>
    <property type="match status" value="1"/>
</dbReference>
<dbReference type="InterPro" id="IPR006297">
    <property type="entry name" value="EF-4"/>
</dbReference>
<dbReference type="InterPro" id="IPR035647">
    <property type="entry name" value="EFG_III/V"/>
</dbReference>
<dbReference type="InterPro" id="IPR000640">
    <property type="entry name" value="EFG_V-like"/>
</dbReference>
<dbReference type="InterPro" id="IPR004161">
    <property type="entry name" value="EFTu-like_2"/>
</dbReference>
<dbReference type="InterPro" id="IPR031157">
    <property type="entry name" value="G_TR_CS"/>
</dbReference>
<dbReference type="InterPro" id="IPR038363">
    <property type="entry name" value="LepA_C_sf"/>
</dbReference>
<dbReference type="InterPro" id="IPR013842">
    <property type="entry name" value="LepA_CTD"/>
</dbReference>
<dbReference type="InterPro" id="IPR035654">
    <property type="entry name" value="LepA_IV"/>
</dbReference>
<dbReference type="InterPro" id="IPR027417">
    <property type="entry name" value="P-loop_NTPase"/>
</dbReference>
<dbReference type="InterPro" id="IPR005225">
    <property type="entry name" value="Small_GTP-bd"/>
</dbReference>
<dbReference type="InterPro" id="IPR000795">
    <property type="entry name" value="T_Tr_GTP-bd_dom"/>
</dbReference>
<dbReference type="NCBIfam" id="TIGR01393">
    <property type="entry name" value="lepA"/>
    <property type="match status" value="1"/>
</dbReference>
<dbReference type="NCBIfam" id="TIGR00231">
    <property type="entry name" value="small_GTP"/>
    <property type="match status" value="1"/>
</dbReference>
<dbReference type="PANTHER" id="PTHR43512:SF4">
    <property type="entry name" value="TRANSLATION FACTOR GUF1 HOMOLOG, CHLOROPLASTIC"/>
    <property type="match status" value="1"/>
</dbReference>
<dbReference type="PANTHER" id="PTHR43512">
    <property type="entry name" value="TRANSLATION FACTOR GUF1-RELATED"/>
    <property type="match status" value="1"/>
</dbReference>
<dbReference type="Pfam" id="PF00679">
    <property type="entry name" value="EFG_C"/>
    <property type="match status" value="1"/>
</dbReference>
<dbReference type="Pfam" id="PF00009">
    <property type="entry name" value="GTP_EFTU"/>
    <property type="match status" value="1"/>
</dbReference>
<dbReference type="Pfam" id="PF03144">
    <property type="entry name" value="GTP_EFTU_D2"/>
    <property type="match status" value="1"/>
</dbReference>
<dbReference type="Pfam" id="PF06421">
    <property type="entry name" value="LepA_C"/>
    <property type="match status" value="1"/>
</dbReference>
<dbReference type="PRINTS" id="PR00315">
    <property type="entry name" value="ELONGATNFCT"/>
</dbReference>
<dbReference type="SMART" id="SM00838">
    <property type="entry name" value="EFG_C"/>
    <property type="match status" value="1"/>
</dbReference>
<dbReference type="SUPFAM" id="SSF54980">
    <property type="entry name" value="EF-G C-terminal domain-like"/>
    <property type="match status" value="2"/>
</dbReference>
<dbReference type="SUPFAM" id="SSF52540">
    <property type="entry name" value="P-loop containing nucleoside triphosphate hydrolases"/>
    <property type="match status" value="1"/>
</dbReference>
<dbReference type="PROSITE" id="PS00301">
    <property type="entry name" value="G_TR_1"/>
    <property type="match status" value="1"/>
</dbReference>
<dbReference type="PROSITE" id="PS51722">
    <property type="entry name" value="G_TR_2"/>
    <property type="match status" value="1"/>
</dbReference>